<name>ERA_STRPB</name>
<dbReference type="EMBL" id="CP000261">
    <property type="protein sequence ID" value="ABF35462.1"/>
    <property type="molecule type" value="Genomic_DNA"/>
</dbReference>
<dbReference type="SMR" id="Q1JD46"/>
<dbReference type="KEGG" id="spj:MGAS2096_Spy0410"/>
<dbReference type="HOGENOM" id="CLU_038009_1_0_9"/>
<dbReference type="GO" id="GO:0005829">
    <property type="term" value="C:cytosol"/>
    <property type="evidence" value="ECO:0007669"/>
    <property type="project" value="TreeGrafter"/>
</dbReference>
<dbReference type="GO" id="GO:0005886">
    <property type="term" value="C:plasma membrane"/>
    <property type="evidence" value="ECO:0007669"/>
    <property type="project" value="UniProtKB-SubCell"/>
</dbReference>
<dbReference type="GO" id="GO:0005525">
    <property type="term" value="F:GTP binding"/>
    <property type="evidence" value="ECO:0007669"/>
    <property type="project" value="UniProtKB-UniRule"/>
</dbReference>
<dbReference type="GO" id="GO:0003924">
    <property type="term" value="F:GTPase activity"/>
    <property type="evidence" value="ECO:0007669"/>
    <property type="project" value="UniProtKB-UniRule"/>
</dbReference>
<dbReference type="GO" id="GO:0043024">
    <property type="term" value="F:ribosomal small subunit binding"/>
    <property type="evidence" value="ECO:0007669"/>
    <property type="project" value="TreeGrafter"/>
</dbReference>
<dbReference type="GO" id="GO:0070181">
    <property type="term" value="F:small ribosomal subunit rRNA binding"/>
    <property type="evidence" value="ECO:0007669"/>
    <property type="project" value="UniProtKB-UniRule"/>
</dbReference>
<dbReference type="GO" id="GO:0000028">
    <property type="term" value="P:ribosomal small subunit assembly"/>
    <property type="evidence" value="ECO:0007669"/>
    <property type="project" value="TreeGrafter"/>
</dbReference>
<dbReference type="CDD" id="cd04163">
    <property type="entry name" value="Era"/>
    <property type="match status" value="1"/>
</dbReference>
<dbReference type="CDD" id="cd22534">
    <property type="entry name" value="KH-II_Era"/>
    <property type="match status" value="1"/>
</dbReference>
<dbReference type="FunFam" id="3.30.300.20:FF:000003">
    <property type="entry name" value="GTPase Era"/>
    <property type="match status" value="1"/>
</dbReference>
<dbReference type="FunFam" id="3.40.50.300:FF:000094">
    <property type="entry name" value="GTPase Era"/>
    <property type="match status" value="1"/>
</dbReference>
<dbReference type="Gene3D" id="3.30.300.20">
    <property type="match status" value="1"/>
</dbReference>
<dbReference type="Gene3D" id="3.40.50.300">
    <property type="entry name" value="P-loop containing nucleotide triphosphate hydrolases"/>
    <property type="match status" value="1"/>
</dbReference>
<dbReference type="HAMAP" id="MF_00367">
    <property type="entry name" value="GTPase_Era"/>
    <property type="match status" value="1"/>
</dbReference>
<dbReference type="InterPro" id="IPR030388">
    <property type="entry name" value="G_ERA_dom"/>
</dbReference>
<dbReference type="InterPro" id="IPR006073">
    <property type="entry name" value="GTP-bd"/>
</dbReference>
<dbReference type="InterPro" id="IPR005662">
    <property type="entry name" value="GTPase_Era-like"/>
</dbReference>
<dbReference type="InterPro" id="IPR015946">
    <property type="entry name" value="KH_dom-like_a/b"/>
</dbReference>
<dbReference type="InterPro" id="IPR004044">
    <property type="entry name" value="KH_dom_type_2"/>
</dbReference>
<dbReference type="InterPro" id="IPR009019">
    <property type="entry name" value="KH_sf_prok-type"/>
</dbReference>
<dbReference type="InterPro" id="IPR027417">
    <property type="entry name" value="P-loop_NTPase"/>
</dbReference>
<dbReference type="InterPro" id="IPR005225">
    <property type="entry name" value="Small_GTP-bd"/>
</dbReference>
<dbReference type="NCBIfam" id="TIGR00436">
    <property type="entry name" value="era"/>
    <property type="match status" value="1"/>
</dbReference>
<dbReference type="NCBIfam" id="NF000908">
    <property type="entry name" value="PRK00089.1"/>
    <property type="match status" value="1"/>
</dbReference>
<dbReference type="NCBIfam" id="TIGR00231">
    <property type="entry name" value="small_GTP"/>
    <property type="match status" value="1"/>
</dbReference>
<dbReference type="PANTHER" id="PTHR42698">
    <property type="entry name" value="GTPASE ERA"/>
    <property type="match status" value="1"/>
</dbReference>
<dbReference type="PANTHER" id="PTHR42698:SF1">
    <property type="entry name" value="GTPASE ERA, MITOCHONDRIAL"/>
    <property type="match status" value="1"/>
</dbReference>
<dbReference type="Pfam" id="PF07650">
    <property type="entry name" value="KH_2"/>
    <property type="match status" value="1"/>
</dbReference>
<dbReference type="Pfam" id="PF01926">
    <property type="entry name" value="MMR_HSR1"/>
    <property type="match status" value="1"/>
</dbReference>
<dbReference type="SUPFAM" id="SSF52540">
    <property type="entry name" value="P-loop containing nucleoside triphosphate hydrolases"/>
    <property type="match status" value="1"/>
</dbReference>
<dbReference type="SUPFAM" id="SSF54814">
    <property type="entry name" value="Prokaryotic type KH domain (KH-domain type II)"/>
    <property type="match status" value="1"/>
</dbReference>
<dbReference type="PROSITE" id="PS51713">
    <property type="entry name" value="G_ERA"/>
    <property type="match status" value="1"/>
</dbReference>
<dbReference type="PROSITE" id="PS50823">
    <property type="entry name" value="KH_TYPE_2"/>
    <property type="match status" value="1"/>
</dbReference>
<protein>
    <recommendedName>
        <fullName evidence="1">GTPase Era</fullName>
    </recommendedName>
</protein>
<comment type="function">
    <text evidence="1">An essential GTPase that binds both GDP and GTP, with rapid nucleotide exchange. Plays a role in 16S rRNA processing and 30S ribosomal subunit biogenesis and possibly also in cell cycle regulation and energy metabolism.</text>
</comment>
<comment type="subunit">
    <text evidence="1">Monomer.</text>
</comment>
<comment type="subcellular location">
    <subcellularLocation>
        <location>Cytoplasm</location>
    </subcellularLocation>
    <subcellularLocation>
        <location evidence="1">Cell membrane</location>
        <topology evidence="1">Peripheral membrane protein</topology>
    </subcellularLocation>
</comment>
<comment type="similarity">
    <text evidence="1 2">Belongs to the TRAFAC class TrmE-Era-EngA-EngB-Septin-like GTPase superfamily. Era GTPase family.</text>
</comment>
<accession>Q1JD46</accession>
<reference key="1">
    <citation type="journal article" date="2006" name="Proc. Natl. Acad. Sci. U.S.A.">
        <title>Molecular genetic anatomy of inter- and intraserotype variation in the human bacterial pathogen group A Streptococcus.</title>
        <authorList>
            <person name="Beres S.B."/>
            <person name="Richter E.W."/>
            <person name="Nagiec M.J."/>
            <person name="Sumby P."/>
            <person name="Porcella S.F."/>
            <person name="DeLeo F.R."/>
            <person name="Musser J.M."/>
        </authorList>
    </citation>
    <scope>NUCLEOTIDE SEQUENCE [LARGE SCALE GENOMIC DNA]</scope>
    <source>
        <strain>MGAS2096</strain>
    </source>
</reference>
<evidence type="ECO:0000255" key="1">
    <source>
        <dbReference type="HAMAP-Rule" id="MF_00367"/>
    </source>
</evidence>
<evidence type="ECO:0000255" key="2">
    <source>
        <dbReference type="PROSITE-ProRule" id="PRU01050"/>
    </source>
</evidence>
<organism>
    <name type="scientific">Streptococcus pyogenes serotype M12 (strain MGAS2096)</name>
    <dbReference type="NCBI Taxonomy" id="370553"/>
    <lineage>
        <taxon>Bacteria</taxon>
        <taxon>Bacillati</taxon>
        <taxon>Bacillota</taxon>
        <taxon>Bacilli</taxon>
        <taxon>Lactobacillales</taxon>
        <taxon>Streptococcaceae</taxon>
        <taxon>Streptococcus</taxon>
    </lineage>
</organism>
<sequence>MFKSGFVAILGRPNVGKSTFLNHVMGQKIAIMSDKAQTTRNKIMGIYTTETEQIVFIDTPGIHKPKTALGDFMVESAYSTLREVETVLFMVPADEKRGKGDDMIIERLKAAKIPVILVINKIDKVHPDQLLEQIDDFRSQMDFKEVVPISALEGNNVPTLIKLLTDNLEEGFQYFPEDQITDHPERFLVSEMVREKVLHLTQQEVPHSVAVVVESMKRDEETDKVHIRATIMVERDSQKGIIIGKQGAMLKKIGKMARRDIELMLGDKVYLETWVKVKKNWRDKKLDLADFGYNEKEY</sequence>
<feature type="chain" id="PRO_1000079751" description="GTPase Era">
    <location>
        <begin position="1"/>
        <end position="298"/>
    </location>
</feature>
<feature type="domain" description="Era-type G" evidence="2">
    <location>
        <begin position="3"/>
        <end position="170"/>
    </location>
</feature>
<feature type="domain" description="KH type-2" evidence="1">
    <location>
        <begin position="201"/>
        <end position="279"/>
    </location>
</feature>
<feature type="region of interest" description="G1" evidence="2">
    <location>
        <begin position="11"/>
        <end position="18"/>
    </location>
</feature>
<feature type="region of interest" description="G2" evidence="2">
    <location>
        <begin position="37"/>
        <end position="41"/>
    </location>
</feature>
<feature type="region of interest" description="G3" evidence="2">
    <location>
        <begin position="58"/>
        <end position="61"/>
    </location>
</feature>
<feature type="region of interest" description="G4" evidence="2">
    <location>
        <begin position="120"/>
        <end position="123"/>
    </location>
</feature>
<feature type="region of interest" description="G5" evidence="2">
    <location>
        <begin position="149"/>
        <end position="151"/>
    </location>
</feature>
<feature type="binding site" evidence="1">
    <location>
        <begin position="11"/>
        <end position="18"/>
    </location>
    <ligand>
        <name>GTP</name>
        <dbReference type="ChEBI" id="CHEBI:37565"/>
    </ligand>
</feature>
<feature type="binding site" evidence="1">
    <location>
        <begin position="58"/>
        <end position="62"/>
    </location>
    <ligand>
        <name>GTP</name>
        <dbReference type="ChEBI" id="CHEBI:37565"/>
    </ligand>
</feature>
<feature type="binding site" evidence="1">
    <location>
        <begin position="120"/>
        <end position="123"/>
    </location>
    <ligand>
        <name>GTP</name>
        <dbReference type="ChEBI" id="CHEBI:37565"/>
    </ligand>
</feature>
<proteinExistence type="inferred from homology"/>
<keyword id="KW-1003">Cell membrane</keyword>
<keyword id="KW-0963">Cytoplasm</keyword>
<keyword id="KW-0342">GTP-binding</keyword>
<keyword id="KW-0472">Membrane</keyword>
<keyword id="KW-0547">Nucleotide-binding</keyword>
<keyword id="KW-0690">Ribosome biogenesis</keyword>
<keyword id="KW-0694">RNA-binding</keyword>
<keyword id="KW-0699">rRNA-binding</keyword>
<gene>
    <name evidence="1" type="primary">era</name>
    <name type="ordered locus">MGAS2096_Spy0410</name>
</gene>